<keyword id="KW-0560">Oxidoreductase</keyword>
<keyword id="KW-1185">Reference proteome</keyword>
<evidence type="ECO:0000250" key="1"/>
<evidence type="ECO:0000305" key="2"/>
<protein>
    <recommendedName>
        <fullName>Uncharacterized oxidoreductase SSP0419</fullName>
        <ecNumber>1.-.-.-</ecNumber>
    </recommendedName>
</protein>
<name>Y0419_STAS1</name>
<dbReference type="EC" id="1.-.-.-"/>
<dbReference type="EMBL" id="AP008934">
    <property type="protein sequence ID" value="BAE17564.1"/>
    <property type="molecule type" value="Genomic_DNA"/>
</dbReference>
<dbReference type="RefSeq" id="WP_002482377.1">
    <property type="nucleotide sequence ID" value="NZ_MTGA01000036.1"/>
</dbReference>
<dbReference type="SMR" id="Q4A054"/>
<dbReference type="KEGG" id="ssp:SSP0419"/>
<dbReference type="PATRIC" id="fig|342451.11.peg.424"/>
<dbReference type="eggNOG" id="COG4221">
    <property type="taxonomic scope" value="Bacteria"/>
</dbReference>
<dbReference type="HOGENOM" id="CLU_010194_2_10_9"/>
<dbReference type="OrthoDB" id="9775296at2"/>
<dbReference type="Proteomes" id="UP000006371">
    <property type="component" value="Chromosome"/>
</dbReference>
<dbReference type="GO" id="GO:0016491">
    <property type="term" value="F:oxidoreductase activity"/>
    <property type="evidence" value="ECO:0007669"/>
    <property type="project" value="UniProtKB-KW"/>
</dbReference>
<dbReference type="CDD" id="cd05233">
    <property type="entry name" value="SDR_c"/>
    <property type="match status" value="1"/>
</dbReference>
<dbReference type="FunFam" id="3.40.50.720:FF:000047">
    <property type="entry name" value="NADP-dependent L-serine/L-allo-threonine dehydrogenase"/>
    <property type="match status" value="1"/>
</dbReference>
<dbReference type="Gene3D" id="3.40.50.720">
    <property type="entry name" value="NAD(P)-binding Rossmann-like Domain"/>
    <property type="match status" value="1"/>
</dbReference>
<dbReference type="InterPro" id="IPR036291">
    <property type="entry name" value="NAD(P)-bd_dom_sf"/>
</dbReference>
<dbReference type="InterPro" id="IPR002347">
    <property type="entry name" value="SDR_fam"/>
</dbReference>
<dbReference type="PANTHER" id="PTHR43115">
    <property type="entry name" value="DEHYDROGENASE/REDUCTASE SDR FAMILY MEMBER 11"/>
    <property type="match status" value="1"/>
</dbReference>
<dbReference type="PANTHER" id="PTHR43115:SF4">
    <property type="entry name" value="DEHYDROGENASE_REDUCTASE SDR FAMILY MEMBER 11"/>
    <property type="match status" value="1"/>
</dbReference>
<dbReference type="Pfam" id="PF00106">
    <property type="entry name" value="adh_short"/>
    <property type="match status" value="1"/>
</dbReference>
<dbReference type="PIRSF" id="PIRSF000126">
    <property type="entry name" value="11-beta-HSD1"/>
    <property type="match status" value="1"/>
</dbReference>
<dbReference type="PRINTS" id="PR00081">
    <property type="entry name" value="GDHRDH"/>
</dbReference>
<dbReference type="PRINTS" id="PR00080">
    <property type="entry name" value="SDRFAMILY"/>
</dbReference>
<dbReference type="SUPFAM" id="SSF51735">
    <property type="entry name" value="NAD(P)-binding Rossmann-fold domains"/>
    <property type="match status" value="1"/>
</dbReference>
<sequence length="234" mass="24895">MVELQDKVAVVTGASSGIGASIAETLANQGVKVVLTGRDESRLAEVAKRIQDNKQAVVETSIVDVTHKEEVTELVEKTKEKFGQIDILVNSAGLMLSSAITEGDVEAWEAMIDVNIKGTLYTINAVLPSMLNQSSGHIINIASISGFEVTKKSTLYSASKAAVHSITQGLEKELAKTGVRVTSISPGMVDTPLSGDTDWGARKKLDPKDIAEAAIYALQQPSHVNVNEVTVRPV</sequence>
<proteinExistence type="inferred from homology"/>
<feature type="chain" id="PRO_0000300481" description="Uncharacterized oxidoreductase SSP0419">
    <location>
        <begin position="1"/>
        <end position="234"/>
    </location>
</feature>
<feature type="active site" description="Proton acceptor" evidence="1">
    <location>
        <position position="156"/>
    </location>
</feature>
<feature type="binding site" evidence="1">
    <location>
        <begin position="10"/>
        <end position="34"/>
    </location>
    <ligand>
        <name>NADP(+)</name>
        <dbReference type="ChEBI" id="CHEBI:58349"/>
    </ligand>
</feature>
<feature type="binding site" evidence="1">
    <location>
        <position position="143"/>
    </location>
    <ligand>
        <name>substrate</name>
    </ligand>
</feature>
<comment type="similarity">
    <text evidence="2">Belongs to the short-chain dehydrogenases/reductases (SDR) family.</text>
</comment>
<accession>Q4A054</accession>
<reference key="1">
    <citation type="journal article" date="2005" name="Proc. Natl. Acad. Sci. U.S.A.">
        <title>Whole genome sequence of Staphylococcus saprophyticus reveals the pathogenesis of uncomplicated urinary tract infection.</title>
        <authorList>
            <person name="Kuroda M."/>
            <person name="Yamashita A."/>
            <person name="Hirakawa H."/>
            <person name="Kumano M."/>
            <person name="Morikawa K."/>
            <person name="Higashide M."/>
            <person name="Maruyama A."/>
            <person name="Inose Y."/>
            <person name="Matoba K."/>
            <person name="Toh H."/>
            <person name="Kuhara S."/>
            <person name="Hattori M."/>
            <person name="Ohta T."/>
        </authorList>
    </citation>
    <scope>NUCLEOTIDE SEQUENCE [LARGE SCALE GENOMIC DNA]</scope>
    <source>
        <strain>ATCC 15305 / DSM 20229 / NCIMB 8711 / NCTC 7292 / S-41</strain>
    </source>
</reference>
<organism>
    <name type="scientific">Staphylococcus saprophyticus subsp. saprophyticus (strain ATCC 15305 / DSM 20229 / NCIMB 8711 / NCTC 7292 / S-41)</name>
    <dbReference type="NCBI Taxonomy" id="342451"/>
    <lineage>
        <taxon>Bacteria</taxon>
        <taxon>Bacillati</taxon>
        <taxon>Bacillota</taxon>
        <taxon>Bacilli</taxon>
        <taxon>Bacillales</taxon>
        <taxon>Staphylococcaceae</taxon>
        <taxon>Staphylococcus</taxon>
    </lineage>
</organism>
<gene>
    <name type="ordered locus">SSP0419</name>
</gene>